<reference key="1">
    <citation type="journal article" date="2007" name="Mol. Phylogenet. Evol.">
        <title>Phylogenetic and evolutionary implications of complete chloroplast genome sequences of four early-diverging angiosperms: Buxus (Buxaceae), Chloranthus (Chloranthaceae), Dioscorea (Dioscoreaceae), and Illicium (Schisandraceae).</title>
        <authorList>
            <person name="Hansen D.R."/>
            <person name="Dastidar S.G."/>
            <person name="Cai Z."/>
            <person name="Penaflor C."/>
            <person name="Kuehl J.V."/>
            <person name="Boore J.L."/>
            <person name="Jansen R.K."/>
        </authorList>
    </citation>
    <scope>NUCLEOTIDE SEQUENCE [LARGE SCALE GENOMIC DNA]</scope>
</reference>
<geneLocation type="chloroplast"/>
<dbReference type="EMBL" id="EF380354">
    <property type="protein sequence ID" value="ABQ52556.1"/>
    <property type="molecule type" value="Genomic_DNA"/>
</dbReference>
<dbReference type="RefSeq" id="YP_001294308.1">
    <property type="nucleotide sequence ID" value="NC_009600.1"/>
</dbReference>
<dbReference type="SMR" id="A6MMY2"/>
<dbReference type="GeneID" id="5236751"/>
<dbReference type="GO" id="GO:0009507">
    <property type="term" value="C:chloroplast"/>
    <property type="evidence" value="ECO:0007669"/>
    <property type="project" value="UniProtKB-SubCell"/>
</dbReference>
<dbReference type="GO" id="GO:0005762">
    <property type="term" value="C:mitochondrial large ribosomal subunit"/>
    <property type="evidence" value="ECO:0007669"/>
    <property type="project" value="TreeGrafter"/>
</dbReference>
<dbReference type="GO" id="GO:0019843">
    <property type="term" value="F:rRNA binding"/>
    <property type="evidence" value="ECO:0007669"/>
    <property type="project" value="InterPro"/>
</dbReference>
<dbReference type="GO" id="GO:0003735">
    <property type="term" value="F:structural constituent of ribosome"/>
    <property type="evidence" value="ECO:0007669"/>
    <property type="project" value="InterPro"/>
</dbReference>
<dbReference type="GO" id="GO:0032543">
    <property type="term" value="P:mitochondrial translation"/>
    <property type="evidence" value="ECO:0007669"/>
    <property type="project" value="TreeGrafter"/>
</dbReference>
<dbReference type="CDD" id="cd01433">
    <property type="entry name" value="Ribosomal_L16_L10e"/>
    <property type="match status" value="1"/>
</dbReference>
<dbReference type="FunFam" id="3.90.1170.10:FF:000001">
    <property type="entry name" value="50S ribosomal protein L16"/>
    <property type="match status" value="1"/>
</dbReference>
<dbReference type="Gene3D" id="3.90.1170.10">
    <property type="entry name" value="Ribosomal protein L10e/L16"/>
    <property type="match status" value="1"/>
</dbReference>
<dbReference type="HAMAP" id="MF_01342">
    <property type="entry name" value="Ribosomal_uL16"/>
    <property type="match status" value="1"/>
</dbReference>
<dbReference type="InterPro" id="IPR047873">
    <property type="entry name" value="Ribosomal_uL16"/>
</dbReference>
<dbReference type="InterPro" id="IPR000114">
    <property type="entry name" value="Ribosomal_uL16_bact-type"/>
</dbReference>
<dbReference type="InterPro" id="IPR020798">
    <property type="entry name" value="Ribosomal_uL16_CS"/>
</dbReference>
<dbReference type="InterPro" id="IPR016180">
    <property type="entry name" value="Ribosomal_uL16_dom"/>
</dbReference>
<dbReference type="InterPro" id="IPR036920">
    <property type="entry name" value="Ribosomal_uL16_sf"/>
</dbReference>
<dbReference type="NCBIfam" id="TIGR01164">
    <property type="entry name" value="rplP_bact"/>
    <property type="match status" value="1"/>
</dbReference>
<dbReference type="PANTHER" id="PTHR12220">
    <property type="entry name" value="50S/60S RIBOSOMAL PROTEIN L16"/>
    <property type="match status" value="1"/>
</dbReference>
<dbReference type="PANTHER" id="PTHR12220:SF13">
    <property type="entry name" value="LARGE RIBOSOMAL SUBUNIT PROTEIN UL16M"/>
    <property type="match status" value="1"/>
</dbReference>
<dbReference type="Pfam" id="PF00252">
    <property type="entry name" value="Ribosomal_L16"/>
    <property type="match status" value="1"/>
</dbReference>
<dbReference type="PRINTS" id="PR00060">
    <property type="entry name" value="RIBOSOMALL16"/>
</dbReference>
<dbReference type="SUPFAM" id="SSF54686">
    <property type="entry name" value="Ribosomal protein L16p/L10e"/>
    <property type="match status" value="1"/>
</dbReference>
<dbReference type="PROSITE" id="PS00586">
    <property type="entry name" value="RIBOSOMAL_L16_1"/>
    <property type="match status" value="1"/>
</dbReference>
<dbReference type="PROSITE" id="PS00701">
    <property type="entry name" value="RIBOSOMAL_L16_2"/>
    <property type="match status" value="1"/>
</dbReference>
<keyword id="KW-0150">Chloroplast</keyword>
<keyword id="KW-0934">Plastid</keyword>
<keyword id="KW-0687">Ribonucleoprotein</keyword>
<keyword id="KW-0689">Ribosomal protein</keyword>
<accession>A6MMY2</accession>
<organism>
    <name type="scientific">Illicium oligandrum</name>
    <name type="common">Star anise</name>
    <dbReference type="NCBI Taxonomy" id="145286"/>
    <lineage>
        <taxon>Eukaryota</taxon>
        <taxon>Viridiplantae</taxon>
        <taxon>Streptophyta</taxon>
        <taxon>Embryophyta</taxon>
        <taxon>Tracheophyta</taxon>
        <taxon>Spermatophyta</taxon>
        <taxon>Magnoliopsida</taxon>
        <taxon>Austrobaileyales</taxon>
        <taxon>Schisandraceae</taxon>
        <taxon>Illicium</taxon>
    </lineage>
</organism>
<name>RK16_ILLOL</name>
<feature type="chain" id="PRO_0000354638" description="Large ribosomal subunit protein uL16c">
    <location>
        <begin position="1"/>
        <end position="136"/>
    </location>
</feature>
<gene>
    <name evidence="1" type="primary">rpl16</name>
</gene>
<comment type="subunit">
    <text evidence="1">Part of the 50S ribosomal subunit.</text>
</comment>
<comment type="subcellular location">
    <subcellularLocation>
        <location>Plastid</location>
        <location>Chloroplast</location>
    </subcellularLocation>
</comment>
<comment type="similarity">
    <text evidence="1">Belongs to the universal ribosomal protein uL16 family.</text>
</comment>
<protein>
    <recommendedName>
        <fullName evidence="1">Large ribosomal subunit protein uL16c</fullName>
    </recommendedName>
    <alternativeName>
        <fullName evidence="2">50S ribosomal protein L16, chloroplastic</fullName>
    </alternativeName>
</protein>
<proteinExistence type="inferred from homology"/>
<sequence length="136" mass="15410">MLSNPKRTRFRKQHRGRMKGVSYRGNHICFGRYALQALEPAWITSRQIEAGRRAMTRYARRGGRIWVRIFPDKPVTVRPTETRMGSGKGSPEYWVSVVKPGRILYEMGGVSETVARSAISIAASKMPIRTQFVIAG</sequence>
<evidence type="ECO:0000255" key="1">
    <source>
        <dbReference type="HAMAP-Rule" id="MF_01342"/>
    </source>
</evidence>
<evidence type="ECO:0000305" key="2"/>